<organism>
    <name type="scientific">Staphylococcus aureus (strain MRSA252)</name>
    <dbReference type="NCBI Taxonomy" id="282458"/>
    <lineage>
        <taxon>Bacteria</taxon>
        <taxon>Bacillati</taxon>
        <taxon>Bacillota</taxon>
        <taxon>Bacilli</taxon>
        <taxon>Bacillales</taxon>
        <taxon>Staphylococcaceae</taxon>
        <taxon>Staphylococcus</taxon>
    </lineage>
</organism>
<sequence length="292" mass="32192">MSQDVNKLSKQPTPDKAEDNAFFPSPYSLSQYTAPKTDFDGVEHKGAYKDGKWKVLMIAAEERYVLLENGKMFSTGNHPVEMLLPLHHLMEAGFDVDVATLSGYPAKLELWAMPTEDEAVISTYNKLKEKLKQPKKLADVIKNELGPDSDYLSVFIPGGHAAVVGISESEDVQQTLDWALENDRFIVTLCHGPAALLSAGLNREKSPLEGYSVCVFPDSLDEGANIEIGYLPGRLKWLVADLLTKQSLKVVNDDMTGRTLKDRKLLTGDSPLASNELGKLAVNEMLNAIQNK</sequence>
<name>HCHA_STAAR</name>
<proteinExistence type="inferred from homology"/>
<dbReference type="EC" id="3.1.2.-" evidence="1"/>
<dbReference type="EC" id="3.5.1.-" evidence="1"/>
<dbReference type="EC" id="3.5.1.124" evidence="1"/>
<dbReference type="EMBL" id="BX571856">
    <property type="protein sequence ID" value="CAG39577.1"/>
    <property type="molecule type" value="Genomic_DNA"/>
</dbReference>
<dbReference type="RefSeq" id="WP_000076413.1">
    <property type="nucleotide sequence ID" value="NC_002952.2"/>
</dbReference>
<dbReference type="SMR" id="Q6GJB7"/>
<dbReference type="KEGG" id="sar:SAR0556"/>
<dbReference type="HOGENOM" id="CLU_066933_0_0_9"/>
<dbReference type="Proteomes" id="UP000000596">
    <property type="component" value="Chromosome"/>
</dbReference>
<dbReference type="GO" id="GO:0005737">
    <property type="term" value="C:cytoplasm"/>
    <property type="evidence" value="ECO:0007669"/>
    <property type="project" value="UniProtKB-SubCell"/>
</dbReference>
<dbReference type="GO" id="GO:0019172">
    <property type="term" value="F:glyoxalase III activity"/>
    <property type="evidence" value="ECO:0007669"/>
    <property type="project" value="TreeGrafter"/>
</dbReference>
<dbReference type="GO" id="GO:0036524">
    <property type="term" value="F:protein deglycase activity"/>
    <property type="evidence" value="ECO:0007669"/>
    <property type="project" value="UniProtKB-UniRule"/>
</dbReference>
<dbReference type="GO" id="GO:0016790">
    <property type="term" value="F:thiolester hydrolase activity"/>
    <property type="evidence" value="ECO:0007669"/>
    <property type="project" value="UniProtKB-UniRule"/>
</dbReference>
<dbReference type="GO" id="GO:0006281">
    <property type="term" value="P:DNA repair"/>
    <property type="evidence" value="ECO:0007669"/>
    <property type="project" value="UniProtKB-UniRule"/>
</dbReference>
<dbReference type="GO" id="GO:0019243">
    <property type="term" value="P:methylglyoxal catabolic process to D-lactate via S-lactoyl-glutathione"/>
    <property type="evidence" value="ECO:0007669"/>
    <property type="project" value="TreeGrafter"/>
</dbReference>
<dbReference type="GO" id="GO:0030091">
    <property type="term" value="P:protein repair"/>
    <property type="evidence" value="ECO:0007669"/>
    <property type="project" value="UniProtKB-UniRule"/>
</dbReference>
<dbReference type="CDD" id="cd03148">
    <property type="entry name" value="GATase1_EcHsp31_like"/>
    <property type="match status" value="1"/>
</dbReference>
<dbReference type="Gene3D" id="3.40.50.880">
    <property type="match status" value="1"/>
</dbReference>
<dbReference type="HAMAP" id="MF_01046">
    <property type="entry name" value="Deglycase_HchA"/>
    <property type="match status" value="1"/>
</dbReference>
<dbReference type="InterPro" id="IPR029062">
    <property type="entry name" value="Class_I_gatase-like"/>
</dbReference>
<dbReference type="InterPro" id="IPR002818">
    <property type="entry name" value="DJ-1/PfpI"/>
</dbReference>
<dbReference type="InterPro" id="IPR017283">
    <property type="entry name" value="HchA"/>
</dbReference>
<dbReference type="InterPro" id="IPR050325">
    <property type="entry name" value="Prot/Nucl_acid_deglycase"/>
</dbReference>
<dbReference type="NCBIfam" id="NF003168">
    <property type="entry name" value="PRK04155.1"/>
    <property type="match status" value="1"/>
</dbReference>
<dbReference type="PANTHER" id="PTHR48094">
    <property type="entry name" value="PROTEIN/NUCLEIC ACID DEGLYCASE DJ-1-RELATED"/>
    <property type="match status" value="1"/>
</dbReference>
<dbReference type="PANTHER" id="PTHR48094:SF20">
    <property type="entry name" value="PROTEIN_NUCLEIC ACID DEGLYCASE 1"/>
    <property type="match status" value="1"/>
</dbReference>
<dbReference type="Pfam" id="PF01965">
    <property type="entry name" value="DJ-1_PfpI"/>
    <property type="match status" value="1"/>
</dbReference>
<dbReference type="PIRSF" id="PIRSF037798">
    <property type="entry name" value="Chaperone_HchA"/>
    <property type="match status" value="1"/>
</dbReference>
<dbReference type="SUPFAM" id="SSF52317">
    <property type="entry name" value="Class I glutamine amidotransferase-like"/>
    <property type="match status" value="1"/>
</dbReference>
<feature type="chain" id="PRO_0000209418" description="Protein/nucleic acid deglycase HchA">
    <location>
        <begin position="1"/>
        <end position="292"/>
    </location>
</feature>
<feature type="region of interest" description="Disordered" evidence="2">
    <location>
        <begin position="1"/>
        <end position="23"/>
    </location>
</feature>
<feature type="compositionally biased region" description="Polar residues" evidence="2">
    <location>
        <begin position="1"/>
        <end position="12"/>
    </location>
</feature>
<feature type="active site" description="Nucleophile" evidence="1">
    <location>
        <position position="190"/>
    </location>
</feature>
<gene>
    <name evidence="1" type="primary">hchA</name>
    <name type="ordered locus">SAR0556</name>
</gene>
<accession>Q6GJB7</accession>
<evidence type="ECO:0000255" key="1">
    <source>
        <dbReference type="HAMAP-Rule" id="MF_01046"/>
    </source>
</evidence>
<evidence type="ECO:0000256" key="2">
    <source>
        <dbReference type="SAM" id="MobiDB-lite"/>
    </source>
</evidence>
<keyword id="KW-0963">Cytoplasm</keyword>
<keyword id="KW-0227">DNA damage</keyword>
<keyword id="KW-0234">DNA repair</keyword>
<keyword id="KW-0378">Hydrolase</keyword>
<keyword id="KW-0346">Stress response</keyword>
<protein>
    <recommendedName>
        <fullName evidence="1">Protein/nucleic acid deglycase HchA</fullName>
        <ecNumber evidence="1">3.1.2.-</ecNumber>
        <ecNumber evidence="1">3.5.1.-</ecNumber>
        <ecNumber evidence="1">3.5.1.124</ecNumber>
    </recommendedName>
    <alternativeName>
        <fullName evidence="1">Maillard deglycase</fullName>
    </alternativeName>
</protein>
<reference key="1">
    <citation type="journal article" date="2004" name="Proc. Natl. Acad. Sci. U.S.A.">
        <title>Complete genomes of two clinical Staphylococcus aureus strains: evidence for the rapid evolution of virulence and drug resistance.</title>
        <authorList>
            <person name="Holden M.T.G."/>
            <person name="Feil E.J."/>
            <person name="Lindsay J.A."/>
            <person name="Peacock S.J."/>
            <person name="Day N.P.J."/>
            <person name="Enright M.C."/>
            <person name="Foster T.J."/>
            <person name="Moore C.E."/>
            <person name="Hurst L."/>
            <person name="Atkin R."/>
            <person name="Barron A."/>
            <person name="Bason N."/>
            <person name="Bentley S.D."/>
            <person name="Chillingworth C."/>
            <person name="Chillingworth T."/>
            <person name="Churcher C."/>
            <person name="Clark L."/>
            <person name="Corton C."/>
            <person name="Cronin A."/>
            <person name="Doggett J."/>
            <person name="Dowd L."/>
            <person name="Feltwell T."/>
            <person name="Hance Z."/>
            <person name="Harris B."/>
            <person name="Hauser H."/>
            <person name="Holroyd S."/>
            <person name="Jagels K."/>
            <person name="James K.D."/>
            <person name="Lennard N."/>
            <person name="Line A."/>
            <person name="Mayes R."/>
            <person name="Moule S."/>
            <person name="Mungall K."/>
            <person name="Ormond D."/>
            <person name="Quail M.A."/>
            <person name="Rabbinowitsch E."/>
            <person name="Rutherford K.M."/>
            <person name="Sanders M."/>
            <person name="Sharp S."/>
            <person name="Simmonds M."/>
            <person name="Stevens K."/>
            <person name="Whitehead S."/>
            <person name="Barrell B.G."/>
            <person name="Spratt B.G."/>
            <person name="Parkhill J."/>
        </authorList>
    </citation>
    <scope>NUCLEOTIDE SEQUENCE [LARGE SCALE GENOMIC DNA]</scope>
    <source>
        <strain>MRSA252</strain>
    </source>
</reference>
<comment type="function">
    <text evidence="1">Protein and nucleotide deglycase that catalyzes the deglycation of the Maillard adducts formed between amino groups of proteins or nucleotides and reactive carbonyl groups of glyoxals. Thus, functions as a protein deglycase that repairs methylglyoxal- and glyoxal-glycated proteins, and releases repaired proteins and lactate or glycolate, respectively. Deglycates cysteine, arginine and lysine residues in proteins, and thus reactivates these proteins by reversing glycation by glyoxals. Acts on early glycation intermediates (hemithioacetals and aminocarbinols), preventing the formation of Schiff bases and advanced glycation endproducts (AGE). Also functions as a nucleotide deglycase able to repair glycated guanine in the free nucleotide pool (GTP, GDP, GMP, dGTP) and in DNA and RNA. Is thus involved in a major nucleotide repair system named guanine glycation repair (GG repair), dedicated to reversing methylglyoxal and glyoxal damage via nucleotide sanitization and direct nucleic acid repair. Plays an important role in protecting cells from carbonyl stress.</text>
</comment>
<comment type="catalytic activity">
    <reaction evidence="1">
        <text>N(omega)-(1-hydroxy-2-oxopropyl)-L-arginyl-[protein] + H2O = lactate + L-arginyl-[protein] + H(+)</text>
        <dbReference type="Rhea" id="RHEA:49548"/>
        <dbReference type="Rhea" id="RHEA-COMP:10532"/>
        <dbReference type="Rhea" id="RHEA-COMP:12428"/>
        <dbReference type="ChEBI" id="CHEBI:15377"/>
        <dbReference type="ChEBI" id="CHEBI:15378"/>
        <dbReference type="ChEBI" id="CHEBI:24996"/>
        <dbReference type="ChEBI" id="CHEBI:29965"/>
        <dbReference type="ChEBI" id="CHEBI:131708"/>
        <dbReference type="EC" id="3.5.1.124"/>
    </reaction>
</comment>
<comment type="catalytic activity">
    <reaction evidence="1">
        <text>N(6)-(1-hydroxy-2-oxopropyl)-L-lysyl-[protein] + H2O = lactate + L-lysyl-[protein] + H(+)</text>
        <dbReference type="Rhea" id="RHEA:49552"/>
        <dbReference type="Rhea" id="RHEA-COMP:9752"/>
        <dbReference type="Rhea" id="RHEA-COMP:12429"/>
        <dbReference type="ChEBI" id="CHEBI:15377"/>
        <dbReference type="ChEBI" id="CHEBI:15378"/>
        <dbReference type="ChEBI" id="CHEBI:24996"/>
        <dbReference type="ChEBI" id="CHEBI:29969"/>
        <dbReference type="ChEBI" id="CHEBI:131709"/>
        <dbReference type="EC" id="3.5.1.124"/>
    </reaction>
</comment>
<comment type="catalytic activity">
    <reaction evidence="1">
        <text>S-(1-hydroxy-2-oxopropyl)-L-cysteinyl-[protein] + H2O = lactate + L-cysteinyl-[protein] + H(+)</text>
        <dbReference type="Rhea" id="RHEA:49556"/>
        <dbReference type="Rhea" id="RHEA-COMP:10131"/>
        <dbReference type="Rhea" id="RHEA-COMP:12430"/>
        <dbReference type="ChEBI" id="CHEBI:15377"/>
        <dbReference type="ChEBI" id="CHEBI:15378"/>
        <dbReference type="ChEBI" id="CHEBI:24996"/>
        <dbReference type="ChEBI" id="CHEBI:29950"/>
        <dbReference type="ChEBI" id="CHEBI:131710"/>
        <dbReference type="EC" id="3.5.1.124"/>
    </reaction>
</comment>
<comment type="catalytic activity">
    <reaction evidence="1">
        <text>N(omega)-(1-hydroxy-2-oxoethyl)-L-arginyl-[protein] + H2O = L-arginyl-[protein] + glycolate + H(+)</text>
        <dbReference type="Rhea" id="RHEA:57188"/>
        <dbReference type="Rhea" id="RHEA-COMP:10532"/>
        <dbReference type="Rhea" id="RHEA-COMP:14844"/>
        <dbReference type="ChEBI" id="CHEBI:15377"/>
        <dbReference type="ChEBI" id="CHEBI:15378"/>
        <dbReference type="ChEBI" id="CHEBI:29805"/>
        <dbReference type="ChEBI" id="CHEBI:29965"/>
        <dbReference type="ChEBI" id="CHEBI:141553"/>
        <dbReference type="EC" id="3.5.1.124"/>
    </reaction>
</comment>
<comment type="catalytic activity">
    <reaction evidence="1">
        <text>N(6)-(1-hydroxy-2-oxoethyl)-L-lysyl-[protein] + H2O = glycolate + L-lysyl-[protein] + H(+)</text>
        <dbReference type="Rhea" id="RHEA:57192"/>
        <dbReference type="Rhea" id="RHEA-COMP:9752"/>
        <dbReference type="Rhea" id="RHEA-COMP:14845"/>
        <dbReference type="ChEBI" id="CHEBI:15377"/>
        <dbReference type="ChEBI" id="CHEBI:15378"/>
        <dbReference type="ChEBI" id="CHEBI:29805"/>
        <dbReference type="ChEBI" id="CHEBI:29969"/>
        <dbReference type="ChEBI" id="CHEBI:141554"/>
        <dbReference type="EC" id="3.5.1.124"/>
    </reaction>
</comment>
<comment type="catalytic activity">
    <reaction evidence="1">
        <text>S-(1-hydroxy-2-oxoethyl)-L-cysteinyl-[protein] + H2O = glycolate + L-cysteinyl-[protein] + H(+)</text>
        <dbReference type="Rhea" id="RHEA:57196"/>
        <dbReference type="Rhea" id="RHEA-COMP:10131"/>
        <dbReference type="Rhea" id="RHEA-COMP:14846"/>
        <dbReference type="ChEBI" id="CHEBI:15377"/>
        <dbReference type="ChEBI" id="CHEBI:15378"/>
        <dbReference type="ChEBI" id="CHEBI:29805"/>
        <dbReference type="ChEBI" id="CHEBI:29950"/>
        <dbReference type="ChEBI" id="CHEBI:141555"/>
        <dbReference type="EC" id="3.5.1.124"/>
    </reaction>
</comment>
<comment type="catalytic activity">
    <reaction evidence="1">
        <text>N(2)-(1-hydroxy-2-oxopropyl)-dGTP + H2O = lactate + dGTP + H(+)</text>
        <dbReference type="Rhea" id="RHEA:57244"/>
        <dbReference type="ChEBI" id="CHEBI:15377"/>
        <dbReference type="ChEBI" id="CHEBI:15378"/>
        <dbReference type="ChEBI" id="CHEBI:24996"/>
        <dbReference type="ChEBI" id="CHEBI:61429"/>
        <dbReference type="ChEBI" id="CHEBI:141569"/>
    </reaction>
</comment>
<comment type="catalytic activity">
    <reaction evidence="1">
        <text>N(2)-(1-hydroxy-2-oxopropyl)-GTP + H2O = lactate + GTP + H(+)</text>
        <dbReference type="Rhea" id="RHEA:57256"/>
        <dbReference type="ChEBI" id="CHEBI:15377"/>
        <dbReference type="ChEBI" id="CHEBI:15378"/>
        <dbReference type="ChEBI" id="CHEBI:24996"/>
        <dbReference type="ChEBI" id="CHEBI:37565"/>
        <dbReference type="ChEBI" id="CHEBI:141570"/>
    </reaction>
</comment>
<comment type="catalytic activity">
    <reaction evidence="1">
        <text>N(2)-(1-hydroxy-2-oxopropyl)-GDP + H2O = lactate + GDP + H(+)</text>
        <dbReference type="Rhea" id="RHEA:57260"/>
        <dbReference type="ChEBI" id="CHEBI:15377"/>
        <dbReference type="ChEBI" id="CHEBI:15378"/>
        <dbReference type="ChEBI" id="CHEBI:24996"/>
        <dbReference type="ChEBI" id="CHEBI:58189"/>
        <dbReference type="ChEBI" id="CHEBI:141573"/>
    </reaction>
</comment>
<comment type="catalytic activity">
    <reaction evidence="1">
        <text>N(2)-(1-hydroxy-2-oxopropyl)-GMP + H2O = lactate + GMP + H(+)</text>
        <dbReference type="Rhea" id="RHEA:57268"/>
        <dbReference type="ChEBI" id="CHEBI:15377"/>
        <dbReference type="ChEBI" id="CHEBI:15378"/>
        <dbReference type="ChEBI" id="CHEBI:24996"/>
        <dbReference type="ChEBI" id="CHEBI:58115"/>
        <dbReference type="ChEBI" id="CHEBI:141575"/>
    </reaction>
</comment>
<comment type="catalytic activity">
    <reaction evidence="1">
        <text>N(2)-(1-hydroxy-2-oxoethyl)-dGTP + H2O = dGTP + glycolate + H(+)</text>
        <dbReference type="Rhea" id="RHEA:57248"/>
        <dbReference type="ChEBI" id="CHEBI:15377"/>
        <dbReference type="ChEBI" id="CHEBI:15378"/>
        <dbReference type="ChEBI" id="CHEBI:29805"/>
        <dbReference type="ChEBI" id="CHEBI:61429"/>
        <dbReference type="ChEBI" id="CHEBI:141572"/>
    </reaction>
</comment>
<comment type="catalytic activity">
    <reaction evidence="1">
        <text>N(2)-(1-hydroxy-2-oxoethyl)-GTP + H2O = glycolate + GTP + H(+)</text>
        <dbReference type="Rhea" id="RHEA:57252"/>
        <dbReference type="ChEBI" id="CHEBI:15377"/>
        <dbReference type="ChEBI" id="CHEBI:15378"/>
        <dbReference type="ChEBI" id="CHEBI:29805"/>
        <dbReference type="ChEBI" id="CHEBI:37565"/>
        <dbReference type="ChEBI" id="CHEBI:141571"/>
    </reaction>
</comment>
<comment type="catalytic activity">
    <reaction evidence="1">
        <text>N(2)-(1-hydroxy-2-oxoethyl)-GDP + H2O = glycolate + GDP + H(+)</text>
        <dbReference type="Rhea" id="RHEA:57264"/>
        <dbReference type="ChEBI" id="CHEBI:15377"/>
        <dbReference type="ChEBI" id="CHEBI:15378"/>
        <dbReference type="ChEBI" id="CHEBI:29805"/>
        <dbReference type="ChEBI" id="CHEBI:58189"/>
        <dbReference type="ChEBI" id="CHEBI:141574"/>
    </reaction>
</comment>
<comment type="catalytic activity">
    <reaction evidence="1">
        <text>N(2)-(1-hydroxy-2-oxoethyl)-GMP + H2O = glycolate + GMP + H(+)</text>
        <dbReference type="Rhea" id="RHEA:57304"/>
        <dbReference type="ChEBI" id="CHEBI:15377"/>
        <dbReference type="ChEBI" id="CHEBI:15378"/>
        <dbReference type="ChEBI" id="CHEBI:29805"/>
        <dbReference type="ChEBI" id="CHEBI:58115"/>
        <dbReference type="ChEBI" id="CHEBI:141576"/>
    </reaction>
</comment>
<comment type="catalytic activity">
    <reaction evidence="1">
        <text>an N(2)-(1-hydroxy-2-oxopropyl)-guanosine in RNA + H2O = a guanosine in RNA + lactate + H(+)</text>
        <dbReference type="Rhea" id="RHEA:57288"/>
        <dbReference type="Rhea" id="RHEA-COMP:14855"/>
        <dbReference type="Rhea" id="RHEA-COMP:14858"/>
        <dbReference type="ChEBI" id="CHEBI:15377"/>
        <dbReference type="ChEBI" id="CHEBI:15378"/>
        <dbReference type="ChEBI" id="CHEBI:24996"/>
        <dbReference type="ChEBI" id="CHEBI:74269"/>
        <dbReference type="ChEBI" id="CHEBI:141580"/>
    </reaction>
</comment>
<comment type="catalytic activity">
    <reaction evidence="1">
        <text>an N(2)-(1-hydroxy-2-oxopropyl)-2'-deoxyguanosine in DNA + H2O = a 2'-deoxyguanosine in DNA + lactate + H(+)</text>
        <dbReference type="Rhea" id="RHEA:57300"/>
        <dbReference type="Rhea" id="RHEA-COMP:11367"/>
        <dbReference type="Rhea" id="RHEA-COMP:14856"/>
        <dbReference type="ChEBI" id="CHEBI:15377"/>
        <dbReference type="ChEBI" id="CHEBI:15378"/>
        <dbReference type="ChEBI" id="CHEBI:24996"/>
        <dbReference type="ChEBI" id="CHEBI:85445"/>
        <dbReference type="ChEBI" id="CHEBI:141578"/>
    </reaction>
</comment>
<comment type="catalytic activity">
    <reaction evidence="1">
        <text>an N(2)-(1-hydroxy-2-oxoethyl)-guanosine in RNA + H2O = a guanosine in RNA + glycolate + H(+)</text>
        <dbReference type="Rhea" id="RHEA:57292"/>
        <dbReference type="Rhea" id="RHEA-COMP:14855"/>
        <dbReference type="Rhea" id="RHEA-COMP:14859"/>
        <dbReference type="ChEBI" id="CHEBI:15377"/>
        <dbReference type="ChEBI" id="CHEBI:15378"/>
        <dbReference type="ChEBI" id="CHEBI:29805"/>
        <dbReference type="ChEBI" id="CHEBI:74269"/>
        <dbReference type="ChEBI" id="CHEBI:141581"/>
    </reaction>
</comment>
<comment type="catalytic activity">
    <reaction evidence="1">
        <text>an N(2)-(1-hydroxy-2-oxoethyl)-2'-deoxyguanosine in DNA + H2O = a 2'-deoxyguanosine in DNA + glycolate + H(+)</text>
        <dbReference type="Rhea" id="RHEA:57296"/>
        <dbReference type="Rhea" id="RHEA-COMP:11367"/>
        <dbReference type="Rhea" id="RHEA-COMP:14857"/>
        <dbReference type="ChEBI" id="CHEBI:15377"/>
        <dbReference type="ChEBI" id="CHEBI:15378"/>
        <dbReference type="ChEBI" id="CHEBI:29805"/>
        <dbReference type="ChEBI" id="CHEBI:85445"/>
        <dbReference type="ChEBI" id="CHEBI:141579"/>
    </reaction>
</comment>
<comment type="subcellular location">
    <subcellularLocation>
        <location evidence="1">Cytoplasm</location>
    </subcellularLocation>
</comment>
<comment type="similarity">
    <text evidence="1">Belongs to the peptidase C56 family. HchA subfamily.</text>
</comment>